<name>IGHG_RABIT</name>
<feature type="chain" id="PRO_0000153595" description="Ig gamma chain C region">
    <location>
        <begin position="1" status="less than"/>
        <end position="323"/>
    </location>
</feature>
<feature type="domain" description="Ig-like 1">
    <location>
        <begin position="6"/>
        <end position="96"/>
    </location>
</feature>
<feature type="domain" description="Ig-like 2">
    <location>
        <begin position="114"/>
        <end position="213"/>
    </location>
</feature>
<feature type="domain" description="Ig-like 3">
    <location>
        <begin position="222"/>
        <end position="318"/>
    </location>
</feature>
<feature type="sequence variant" description="In D11 marker.">
    <original>T</original>
    <variation>M</variation>
    <location>
        <position position="104"/>
    </location>
</feature>
<feature type="sequence variant" description="In E15 marker.">
    <original>T</original>
    <variation>A</variation>
    <location>
        <position position="185"/>
    </location>
</feature>
<feature type="sequence conflict" description="In Ref. 2; AA sequence." evidence="1" ref="2">
    <original>N</original>
    <variation>E</variation>
    <location>
        <position position="48"/>
    </location>
</feature>
<feature type="sequence conflict" description="In Ref. 2; AA sequence." evidence="1" ref="2">
    <original>V</original>
    <variation>VPV</variation>
    <location>
        <position position="71"/>
    </location>
</feature>
<feature type="sequence conflict" description="In Ref. 3 and 4; AA sequence." evidence="1" ref="3 4">
    <original>Q</original>
    <variation>E</variation>
    <location>
        <position position="144"/>
    </location>
</feature>
<feature type="sequence conflict" description="In Ref. 5; AA sequence." evidence="1" ref="5">
    <original>N</original>
    <variation>D</variation>
    <location>
        <position position="173"/>
    </location>
</feature>
<feature type="sequence conflict" description="In Ref. 3 and 5; AA sequence." evidence="1" ref="3 5">
    <original>Q</original>
    <variation>E</variation>
    <location>
        <position position="187"/>
    </location>
</feature>
<feature type="sequence conflict" description="In Ref. 5; AA sequence." evidence="1" ref="5">
    <original>N</original>
    <variation>D</variation>
    <location>
        <position position="201"/>
    </location>
</feature>
<feature type="sequence conflict" description="In Ref. 5; AA sequence." evidence="1" ref="5">
    <original>Q</original>
    <variation>E</variation>
    <location>
        <position position="218"/>
    </location>
</feature>
<feature type="sequence conflict" description="In Ref. 5; AA sequence." evidence="1" ref="5">
    <original>E</original>
    <variation>Q</variation>
    <location>
        <position position="233"/>
    </location>
</feature>
<feature type="sequence conflict" description="In Ref. 5; AA sequence." evidence="1" ref="5">
    <original>N</original>
    <variation>D</variation>
    <location>
        <position position="246"/>
    </location>
</feature>
<feature type="sequence conflict" description="In Ref. 5; AA sequence." evidence="1" ref="5">
    <original>E</original>
    <variation>G</variation>
    <location>
        <position position="256"/>
    </location>
</feature>
<feature type="sequence conflict" description="In Ref. 5; AA sequence." evidence="1" ref="5">
    <original>N</original>
    <variation>D</variation>
    <location>
        <position position="260"/>
    </location>
</feature>
<feature type="sequence conflict" description="In Ref. 5; AA sequence." evidence="1" ref="5">
    <original>N</original>
    <variation>D</variation>
    <location>
        <position position="266"/>
    </location>
</feature>
<feature type="sequence conflict" description="In Ref. 5; AA sequence." evidence="1" ref="5">
    <original>Y</original>
    <variation>W</variation>
    <location>
        <position position="280"/>
    </location>
</feature>
<feature type="sequence conflict" description="In Ref. 5; AA sequence." evidence="1" ref="5">
    <original>N</original>
    <variation>S</variation>
    <location>
        <position position="284"/>
    </location>
</feature>
<feature type="non-terminal residue">
    <location>
        <position position="1"/>
    </location>
</feature>
<feature type="strand" evidence="3">
    <location>
        <begin position="7"/>
        <end position="11"/>
    </location>
</feature>
<feature type="strand" evidence="3">
    <location>
        <begin position="22"/>
        <end position="35"/>
    </location>
</feature>
<feature type="strand" evidence="3">
    <location>
        <begin position="38"/>
        <end position="41"/>
    </location>
</feature>
<feature type="helix" evidence="3">
    <location>
        <begin position="42"/>
        <end position="44"/>
    </location>
</feature>
<feature type="strand" evidence="3">
    <location>
        <begin position="50"/>
        <end position="52"/>
    </location>
</feature>
<feature type="strand" evidence="3">
    <location>
        <begin position="63"/>
        <end position="72"/>
    </location>
</feature>
<feature type="strand" evidence="3">
    <location>
        <begin position="78"/>
        <end position="84"/>
    </location>
</feature>
<feature type="helix" evidence="3">
    <location>
        <begin position="85"/>
        <end position="87"/>
    </location>
</feature>
<feature type="strand" evidence="3">
    <location>
        <begin position="89"/>
        <end position="95"/>
    </location>
</feature>
<feature type="strand" evidence="2">
    <location>
        <begin position="115"/>
        <end position="119"/>
    </location>
</feature>
<feature type="helix" evidence="2">
    <location>
        <begin position="123"/>
        <end position="127"/>
    </location>
</feature>
<feature type="strand" evidence="2">
    <location>
        <begin position="134"/>
        <end position="142"/>
    </location>
</feature>
<feature type="strand" evidence="2">
    <location>
        <begin position="144"/>
        <end position="146"/>
    </location>
</feature>
<feature type="strand" evidence="2">
    <location>
        <begin position="150"/>
        <end position="155"/>
    </location>
</feature>
<feature type="strand" evidence="2">
    <location>
        <begin position="158"/>
        <end position="160"/>
    </location>
</feature>
<feature type="strand" evidence="2">
    <location>
        <begin position="167"/>
        <end position="170"/>
    </location>
</feature>
<feature type="strand" evidence="2">
    <location>
        <begin position="176"/>
        <end position="183"/>
    </location>
</feature>
<feature type="helix" evidence="2">
    <location>
        <begin position="186"/>
        <end position="190"/>
    </location>
</feature>
<feature type="strand" evidence="2">
    <location>
        <begin position="195"/>
        <end position="200"/>
    </location>
</feature>
<feature type="strand" evidence="2">
    <location>
        <begin position="208"/>
        <end position="212"/>
    </location>
</feature>
<feature type="strand" evidence="2">
    <location>
        <begin position="223"/>
        <end position="227"/>
    </location>
</feature>
<feature type="helix" evidence="2">
    <location>
        <begin position="231"/>
        <end position="235"/>
    </location>
</feature>
<feature type="strand" evidence="2">
    <location>
        <begin position="236"/>
        <end position="251"/>
    </location>
</feature>
<feature type="strand" evidence="2">
    <location>
        <begin position="254"/>
        <end position="259"/>
    </location>
</feature>
<feature type="strand" evidence="2">
    <location>
        <begin position="262"/>
        <end position="264"/>
    </location>
</feature>
<feature type="strand" evidence="2">
    <location>
        <begin position="267"/>
        <end position="269"/>
    </location>
</feature>
<feature type="strand" evidence="2">
    <location>
        <begin position="280"/>
        <end position="289"/>
    </location>
</feature>
<feature type="helix" evidence="2">
    <location>
        <begin position="290"/>
        <end position="294"/>
    </location>
</feature>
<feature type="strand" evidence="2">
    <location>
        <begin position="299"/>
        <end position="304"/>
    </location>
</feature>
<feature type="helix" evidence="2">
    <location>
        <begin position="309"/>
        <end position="311"/>
    </location>
</feature>
<feature type="strand" evidence="2">
    <location>
        <begin position="312"/>
        <end position="317"/>
    </location>
</feature>
<evidence type="ECO:0000305" key="1"/>
<evidence type="ECO:0007829" key="2">
    <source>
        <dbReference type="PDB" id="2VUO"/>
    </source>
</evidence>
<evidence type="ECO:0007829" key="3">
    <source>
        <dbReference type="PDB" id="5DTF"/>
    </source>
</evidence>
<proteinExistence type="evidence at protein level"/>
<organism>
    <name type="scientific">Oryctolagus cuniculus</name>
    <name type="common">Rabbit</name>
    <dbReference type="NCBI Taxonomy" id="9986"/>
    <lineage>
        <taxon>Eukaryota</taxon>
        <taxon>Metazoa</taxon>
        <taxon>Chordata</taxon>
        <taxon>Craniata</taxon>
        <taxon>Vertebrata</taxon>
        <taxon>Euteleostomi</taxon>
        <taxon>Mammalia</taxon>
        <taxon>Eutheria</taxon>
        <taxon>Euarchontoglires</taxon>
        <taxon>Glires</taxon>
        <taxon>Lagomorpha</taxon>
        <taxon>Leporidae</taxon>
        <taxon>Oryctolagus</taxon>
    </lineage>
</organism>
<reference key="1">
    <citation type="journal article" date="1983" name="Immunogenetics">
        <title>Nucleotide sequence of a rabbit IgG heavy chain from the recombinant F-I haplotype.</title>
        <authorList>
            <person name="Bernstein K.E."/>
            <person name="Alexander C.B."/>
            <person name="Mage R.G."/>
        </authorList>
    </citation>
    <scope>NUCLEOTIDE SEQUENCE [MRNA]</scope>
</reference>
<reference key="2">
    <citation type="journal article" date="1975" name="Biochem. J.">
        <title>Sequence studies on the constant region of the Fd sections of rabbit immunoglobulin G of different allotype.</title>
        <authorList>
            <person name="Pratt D.M."/>
            <person name="Mole L.E."/>
        </authorList>
    </citation>
    <scope>PROTEIN SEQUENCE OF 1-128</scope>
</reference>
<reference key="3">
    <citation type="journal article" date="1982" name="Proc. Natl. Acad. Sci. U.S.A.">
        <title>Heavy chain genes of rabbit IgG: isolation of a cDNA encoding gamma heavy chain and identification of two genomic C gamma genes.</title>
        <authorList>
            <person name="Martens C.L."/>
            <person name="Moore K.W."/>
            <person name="Steinmetz M."/>
            <person name="Hood L."/>
            <person name="Knight K.L."/>
        </authorList>
    </citation>
    <scope>NUCLEOTIDE SEQUENCE [MRNA] OF 88-266</scope>
</reference>
<reference key="4">
    <citation type="journal article" date="1970" name="Biochem. J.">
        <title>Sequence studies of the Fd section of the heavy chain of rabbit immunoglobulin G.</title>
        <authorList>
            <person name="Fruchter R.G."/>
            <person name="Jackson S.A."/>
            <person name="Mole L.E."/>
            <person name="Porter R.R."/>
        </authorList>
    </citation>
    <scope>PROTEIN SEQUENCE OF 132-161</scope>
</reference>
<reference key="5">
    <citation type="book" date="1967" name="Gamma globulins, Nobel symp. 3">
        <editorList>
            <person name="Killander J."/>
        </editorList>
        <authorList>
            <person name="Hill R.L."/>
            <person name="Lebovitz H.E."/>
            <person name="Fellows R.E. Jr."/>
            <person name="Delaney R."/>
        </authorList>
    </citation>
    <scope>PROTEIN SEQUENCE OF 129-131 AND 155-322</scope>
</reference>
<dbReference type="EMBL" id="M16426">
    <property type="protein sequence ID" value="AAA31289.1"/>
    <property type="molecule type" value="mRNA"/>
</dbReference>
<dbReference type="PIR" id="A91749">
    <property type="entry name" value="GHRB"/>
</dbReference>
<dbReference type="PDB" id="2VUO">
    <property type="method" value="X-ray"/>
    <property type="resolution" value="1.95 A"/>
    <property type="chains" value="A/B=105-323"/>
</dbReference>
<dbReference type="PDB" id="5DTF">
    <property type="method" value="X-ray"/>
    <property type="resolution" value="1.90 A"/>
    <property type="chains" value="A/H=1-104"/>
</dbReference>
<dbReference type="PDBsum" id="2VUO"/>
<dbReference type="PDBsum" id="5DTF"/>
<dbReference type="SMR" id="P01870"/>
<dbReference type="FunCoup" id="P01870">
    <property type="interactions" value="45"/>
</dbReference>
<dbReference type="ABCD" id="P01870">
    <property type="antibodies" value="4 sequenced antibodies"/>
</dbReference>
<dbReference type="InParanoid" id="P01870"/>
<dbReference type="EvolutionaryTrace" id="P01870"/>
<dbReference type="Proteomes" id="UP000001811">
    <property type="component" value="Unplaced"/>
</dbReference>
<dbReference type="GO" id="GO:0034987">
    <property type="term" value="F:immunoglobulin receptor binding"/>
    <property type="evidence" value="ECO:0000353"/>
    <property type="project" value="AgBase"/>
</dbReference>
<dbReference type="CDD" id="cd05768">
    <property type="entry name" value="IgC1_CH3_IgAGD_CH4_IgAEM"/>
    <property type="match status" value="1"/>
</dbReference>
<dbReference type="FunFam" id="2.60.40.10:FF:000463">
    <property type="entry name" value="Immunoglobulin heavy constant gamma 1"/>
    <property type="match status" value="1"/>
</dbReference>
<dbReference type="FunFam" id="2.60.40.10:FF:001129">
    <property type="entry name" value="Immunoglobulin heavy constant gamma 1"/>
    <property type="match status" value="1"/>
</dbReference>
<dbReference type="FunFam" id="2.60.40.10:FF:001540">
    <property type="entry name" value="Immunoglobulin heavy constant gamma 1"/>
    <property type="match status" value="1"/>
</dbReference>
<dbReference type="Gene3D" id="2.60.40.10">
    <property type="entry name" value="Immunoglobulins"/>
    <property type="match status" value="3"/>
</dbReference>
<dbReference type="InterPro" id="IPR007110">
    <property type="entry name" value="Ig-like_dom"/>
</dbReference>
<dbReference type="InterPro" id="IPR036179">
    <property type="entry name" value="Ig-like_dom_sf"/>
</dbReference>
<dbReference type="InterPro" id="IPR013783">
    <property type="entry name" value="Ig-like_fold"/>
</dbReference>
<dbReference type="InterPro" id="IPR003006">
    <property type="entry name" value="Ig/MHC_CS"/>
</dbReference>
<dbReference type="InterPro" id="IPR003597">
    <property type="entry name" value="Ig_C1-set"/>
</dbReference>
<dbReference type="InterPro" id="IPR050380">
    <property type="entry name" value="Immune_Resp_Modulators"/>
</dbReference>
<dbReference type="PANTHER" id="PTHR23411">
    <property type="entry name" value="TAPASIN"/>
    <property type="match status" value="1"/>
</dbReference>
<dbReference type="Pfam" id="PF07654">
    <property type="entry name" value="C1-set"/>
    <property type="match status" value="3"/>
</dbReference>
<dbReference type="SMART" id="SM00407">
    <property type="entry name" value="IGc1"/>
    <property type="match status" value="2"/>
</dbReference>
<dbReference type="SUPFAM" id="SSF48726">
    <property type="entry name" value="Immunoglobulin"/>
    <property type="match status" value="3"/>
</dbReference>
<dbReference type="PROSITE" id="PS50835">
    <property type="entry name" value="IG_LIKE"/>
    <property type="match status" value="3"/>
</dbReference>
<dbReference type="PROSITE" id="PS00290">
    <property type="entry name" value="IG_MHC"/>
    <property type="match status" value="1"/>
</dbReference>
<protein>
    <recommendedName>
        <fullName>Ig gamma chain C region</fullName>
    </recommendedName>
</protein>
<keyword id="KW-0002">3D-structure</keyword>
<keyword id="KW-0903">Direct protein sequencing</keyword>
<keyword id="KW-0393">Immunoglobulin domain</keyword>
<keyword id="KW-1185">Reference proteome</keyword>
<keyword id="KW-0677">Repeat</keyword>
<comment type="miscellaneous">
    <text>PubMed:6313520 sequence has the D12 allotypic marker, 104-Thr, and the E14 marker, 185-Thr. PubMed:6193512 has the D11 and E15 markers and Ref.5 the E15 marker.</text>
</comment>
<sequence>GQPKAPSVFPLAPCCGDTPSSTVTLGCLVKGYLPEPVTVTWNSGTLTNGVRTFPSVRQSSGLYSLSSVVSVTSSSQPVTCNVAHPATNTKVDKTVAPSTCSKPTCPPPELLGGPSVFIFPPKPKDTLMISRTPEVTCVVVDVSQDDPEVQFTWYINNEQVRTARPPLREQQFNSTIRVVSTLPITHQDWLRGKEFKCKVHNKALPAPIEKTISKARGQPLEPKVYTMGPPREELSSRSVSLTCMINGFYPSDISVEWEKNGKAEDNYKTTPAVLDSDGSYFLYNKLSVPTSEWQRGDVFTCSVMHEALHNHYTQKSISRSPGK</sequence>
<accession>P01870</accession>